<reference key="1">
    <citation type="journal article" date="2011" name="MBio">
        <title>Novel metabolic attributes of the genus Cyanothece, comprising a group of unicellular nitrogen-fixing Cyanobacteria.</title>
        <authorList>
            <person name="Bandyopadhyay A."/>
            <person name="Elvitigala T."/>
            <person name="Welsh E."/>
            <person name="Stockel J."/>
            <person name="Liberton M."/>
            <person name="Min H."/>
            <person name="Sherman L.A."/>
            <person name="Pakrasi H.B."/>
        </authorList>
    </citation>
    <scope>NUCLEOTIDE SEQUENCE [LARGE SCALE GENOMIC DNA]</scope>
    <source>
        <strain>PCC 7424</strain>
    </source>
</reference>
<accession>B7KI42</accession>
<feature type="chain" id="PRO_1000190515" description="Glutamyl-tRNA reductase">
    <location>
        <begin position="1"/>
        <end position="428"/>
    </location>
</feature>
<feature type="active site" description="Nucleophile" evidence="1">
    <location>
        <position position="50"/>
    </location>
</feature>
<feature type="binding site" evidence="1">
    <location>
        <begin position="49"/>
        <end position="52"/>
    </location>
    <ligand>
        <name>substrate</name>
    </ligand>
</feature>
<feature type="binding site" evidence="1">
    <location>
        <position position="109"/>
    </location>
    <ligand>
        <name>substrate</name>
    </ligand>
</feature>
<feature type="binding site" evidence="1">
    <location>
        <begin position="114"/>
        <end position="116"/>
    </location>
    <ligand>
        <name>substrate</name>
    </ligand>
</feature>
<feature type="binding site" evidence="1">
    <location>
        <position position="120"/>
    </location>
    <ligand>
        <name>substrate</name>
    </ligand>
</feature>
<feature type="binding site" evidence="1">
    <location>
        <begin position="189"/>
        <end position="194"/>
    </location>
    <ligand>
        <name>NADP(+)</name>
        <dbReference type="ChEBI" id="CHEBI:58349"/>
    </ligand>
</feature>
<feature type="site" description="Important for activity" evidence="1">
    <location>
        <position position="99"/>
    </location>
</feature>
<comment type="function">
    <text evidence="1">Catalyzes the NADPH-dependent reduction of glutamyl-tRNA(Glu) to glutamate 1-semialdehyde (GSA).</text>
</comment>
<comment type="catalytic activity">
    <reaction evidence="1">
        <text>(S)-4-amino-5-oxopentanoate + tRNA(Glu) + NADP(+) = L-glutamyl-tRNA(Glu) + NADPH + H(+)</text>
        <dbReference type="Rhea" id="RHEA:12344"/>
        <dbReference type="Rhea" id="RHEA-COMP:9663"/>
        <dbReference type="Rhea" id="RHEA-COMP:9680"/>
        <dbReference type="ChEBI" id="CHEBI:15378"/>
        <dbReference type="ChEBI" id="CHEBI:57501"/>
        <dbReference type="ChEBI" id="CHEBI:57783"/>
        <dbReference type="ChEBI" id="CHEBI:58349"/>
        <dbReference type="ChEBI" id="CHEBI:78442"/>
        <dbReference type="ChEBI" id="CHEBI:78520"/>
        <dbReference type="EC" id="1.2.1.70"/>
    </reaction>
</comment>
<comment type="pathway">
    <text evidence="1">Porphyrin-containing compound metabolism; protoporphyrin-IX biosynthesis; 5-aminolevulinate from L-glutamyl-tRNA(Glu): step 1/2.</text>
</comment>
<comment type="pathway">
    <text evidence="1">Porphyrin-containing compound metabolism; chlorophyll biosynthesis.</text>
</comment>
<comment type="subunit">
    <text evidence="1">Homodimer.</text>
</comment>
<comment type="domain">
    <text evidence="1">Possesses an unusual extended V-shaped dimeric structure with each monomer consisting of three distinct domains arranged along a curved 'spinal' alpha-helix. The N-terminal catalytic domain specifically recognizes the glutamate moiety of the substrate. The second domain is the NADPH-binding domain, and the third C-terminal domain is responsible for dimerization.</text>
</comment>
<comment type="miscellaneous">
    <text evidence="1">During catalysis, the active site Cys acts as a nucleophile attacking the alpha-carbonyl group of tRNA-bound glutamate with the formation of a thioester intermediate between enzyme and glutamate, and the concomitant release of tRNA(Glu). The thioester intermediate is finally reduced by direct hydride transfer from NADPH, to form the product GSA.</text>
</comment>
<comment type="similarity">
    <text evidence="1">Belongs to the glutamyl-tRNA reductase family.</text>
</comment>
<sequence>MNIAVVGLSHKTAPVEVREKLSIPEAKLEEVLAHLKSYPHIQEVAILSTCNRLEIYAVVTETEQGIIEISQFLSEKGHIPLHHLRRHLFILLHQDAVRHLMRVAAGLESLVLGEGQILAQVKNTHKLAQKYGGIGRLLDRLFKQAMTAGKRVRSETSIGTGAVSISSAAVELAQMKVIDICVCRVTIIGAGKMSRLLVQHLLSKGVSKIAIVNRSLRRAQELAGLFPEAQLQLHPLEEMINAVSVSDIVFTSTGATEPILNRSNLESIIAVNQSLMLVDISVPRNVDADVQQLEQIQSYNVDDLKAVVAANQESRRRLAQEAEGLLEEEVESFELWWRSLDTVPTISCLRDKVETIREQELEKALSRLGTEFAEKHQEVIEALTRGIVNKILHEPMVQLRAQQDIEARKRCLQSLQMLFDLDIEEQYT</sequence>
<gene>
    <name evidence="1" type="primary">hemA</name>
    <name type="ordered locus">PCC7424_5179</name>
</gene>
<organism>
    <name type="scientific">Gloeothece citriformis (strain PCC 7424)</name>
    <name type="common">Cyanothece sp. (strain PCC 7424)</name>
    <dbReference type="NCBI Taxonomy" id="65393"/>
    <lineage>
        <taxon>Bacteria</taxon>
        <taxon>Bacillati</taxon>
        <taxon>Cyanobacteriota</taxon>
        <taxon>Cyanophyceae</taxon>
        <taxon>Oscillatoriophycideae</taxon>
        <taxon>Chroococcales</taxon>
        <taxon>Aphanothecaceae</taxon>
        <taxon>Gloeothece</taxon>
        <taxon>Gloeothece citriformis</taxon>
    </lineage>
</organism>
<keyword id="KW-0149">Chlorophyll biosynthesis</keyword>
<keyword id="KW-0521">NADP</keyword>
<keyword id="KW-0560">Oxidoreductase</keyword>
<keyword id="KW-0627">Porphyrin biosynthesis</keyword>
<keyword id="KW-1185">Reference proteome</keyword>
<proteinExistence type="inferred from homology"/>
<protein>
    <recommendedName>
        <fullName evidence="1">Glutamyl-tRNA reductase</fullName>
        <shortName evidence="1">GluTR</shortName>
        <ecNumber evidence="1">1.2.1.70</ecNumber>
    </recommendedName>
</protein>
<name>HEM1_GLOC7</name>
<evidence type="ECO:0000255" key="1">
    <source>
        <dbReference type="HAMAP-Rule" id="MF_00087"/>
    </source>
</evidence>
<dbReference type="EC" id="1.2.1.70" evidence="1"/>
<dbReference type="EMBL" id="CP001291">
    <property type="protein sequence ID" value="ACK73529.1"/>
    <property type="molecule type" value="Genomic_DNA"/>
</dbReference>
<dbReference type="RefSeq" id="WP_015957108.1">
    <property type="nucleotide sequence ID" value="NC_011729.1"/>
</dbReference>
<dbReference type="SMR" id="B7KI42"/>
<dbReference type="STRING" id="65393.PCC7424_5179"/>
<dbReference type="KEGG" id="cyc:PCC7424_5179"/>
<dbReference type="eggNOG" id="COG0373">
    <property type="taxonomic scope" value="Bacteria"/>
</dbReference>
<dbReference type="HOGENOM" id="CLU_035113_2_1_3"/>
<dbReference type="OrthoDB" id="110209at2"/>
<dbReference type="UniPathway" id="UPA00251">
    <property type="reaction ID" value="UER00316"/>
</dbReference>
<dbReference type="UniPathway" id="UPA00668"/>
<dbReference type="Proteomes" id="UP000002384">
    <property type="component" value="Chromosome"/>
</dbReference>
<dbReference type="GO" id="GO:0008883">
    <property type="term" value="F:glutamyl-tRNA reductase activity"/>
    <property type="evidence" value="ECO:0007669"/>
    <property type="project" value="UniProtKB-UniRule"/>
</dbReference>
<dbReference type="GO" id="GO:0050661">
    <property type="term" value="F:NADP binding"/>
    <property type="evidence" value="ECO:0007669"/>
    <property type="project" value="InterPro"/>
</dbReference>
<dbReference type="GO" id="GO:0015995">
    <property type="term" value="P:chlorophyll biosynthetic process"/>
    <property type="evidence" value="ECO:0007669"/>
    <property type="project" value="UniProtKB-UniRule"/>
</dbReference>
<dbReference type="GO" id="GO:0006782">
    <property type="term" value="P:protoporphyrinogen IX biosynthetic process"/>
    <property type="evidence" value="ECO:0007669"/>
    <property type="project" value="UniProtKB-UniRule"/>
</dbReference>
<dbReference type="CDD" id="cd05213">
    <property type="entry name" value="NAD_bind_Glutamyl_tRNA_reduct"/>
    <property type="match status" value="1"/>
</dbReference>
<dbReference type="FunFam" id="3.30.460.30:FF:000001">
    <property type="entry name" value="Glutamyl-tRNA reductase"/>
    <property type="match status" value="1"/>
</dbReference>
<dbReference type="FunFam" id="3.40.50.720:FF:000031">
    <property type="entry name" value="Glutamyl-tRNA reductase"/>
    <property type="match status" value="1"/>
</dbReference>
<dbReference type="Gene3D" id="3.30.460.30">
    <property type="entry name" value="Glutamyl-tRNA reductase, N-terminal domain"/>
    <property type="match status" value="1"/>
</dbReference>
<dbReference type="Gene3D" id="3.40.50.720">
    <property type="entry name" value="NAD(P)-binding Rossmann-like Domain"/>
    <property type="match status" value="1"/>
</dbReference>
<dbReference type="HAMAP" id="MF_00087">
    <property type="entry name" value="Glu_tRNA_reductase"/>
    <property type="match status" value="1"/>
</dbReference>
<dbReference type="InterPro" id="IPR000343">
    <property type="entry name" value="4pyrrol_synth_GluRdtase"/>
</dbReference>
<dbReference type="InterPro" id="IPR015896">
    <property type="entry name" value="4pyrrol_synth_GluRdtase_dimer"/>
</dbReference>
<dbReference type="InterPro" id="IPR015895">
    <property type="entry name" value="4pyrrol_synth_GluRdtase_N"/>
</dbReference>
<dbReference type="InterPro" id="IPR018214">
    <property type="entry name" value="GluRdtase_CS"/>
</dbReference>
<dbReference type="InterPro" id="IPR036453">
    <property type="entry name" value="GluRdtase_dimer_dom_sf"/>
</dbReference>
<dbReference type="InterPro" id="IPR036343">
    <property type="entry name" value="GluRdtase_N_sf"/>
</dbReference>
<dbReference type="InterPro" id="IPR036291">
    <property type="entry name" value="NAD(P)-bd_dom_sf"/>
</dbReference>
<dbReference type="InterPro" id="IPR006151">
    <property type="entry name" value="Shikm_DH/Glu-tRNA_Rdtase"/>
</dbReference>
<dbReference type="NCBIfam" id="TIGR01035">
    <property type="entry name" value="hemA"/>
    <property type="match status" value="1"/>
</dbReference>
<dbReference type="NCBIfam" id="NF000744">
    <property type="entry name" value="PRK00045.1-3"/>
    <property type="match status" value="1"/>
</dbReference>
<dbReference type="PANTHER" id="PTHR43120">
    <property type="entry name" value="GLUTAMYL-TRNA REDUCTASE 1, CHLOROPLASTIC"/>
    <property type="match status" value="1"/>
</dbReference>
<dbReference type="PANTHER" id="PTHR43120:SF1">
    <property type="entry name" value="GLUTAMYL-TRNA REDUCTASE 1, CHLOROPLASTIC"/>
    <property type="match status" value="1"/>
</dbReference>
<dbReference type="Pfam" id="PF00745">
    <property type="entry name" value="GlutR_dimer"/>
    <property type="match status" value="1"/>
</dbReference>
<dbReference type="Pfam" id="PF05201">
    <property type="entry name" value="GlutR_N"/>
    <property type="match status" value="1"/>
</dbReference>
<dbReference type="Pfam" id="PF01488">
    <property type="entry name" value="Shikimate_DH"/>
    <property type="match status" value="1"/>
</dbReference>
<dbReference type="PIRSF" id="PIRSF000445">
    <property type="entry name" value="4pyrrol_synth_GluRdtase"/>
    <property type="match status" value="1"/>
</dbReference>
<dbReference type="SUPFAM" id="SSF69742">
    <property type="entry name" value="Glutamyl tRNA-reductase catalytic, N-terminal domain"/>
    <property type="match status" value="1"/>
</dbReference>
<dbReference type="SUPFAM" id="SSF69075">
    <property type="entry name" value="Glutamyl tRNA-reductase dimerization domain"/>
    <property type="match status" value="1"/>
</dbReference>
<dbReference type="SUPFAM" id="SSF51735">
    <property type="entry name" value="NAD(P)-binding Rossmann-fold domains"/>
    <property type="match status" value="1"/>
</dbReference>
<dbReference type="PROSITE" id="PS00747">
    <property type="entry name" value="GLUTR"/>
    <property type="match status" value="1"/>
</dbReference>